<sequence>MSNYHHNHNYQHRPRGYERLPGKRLPDRWNIYDNVGRDIDGTRFVPFKTPLDSSFFDGKNMPVELQFGVKTLISLAQQANKQIGLVIDLTNTDRYYKKTEWADHGVKYLKLNCPGHEVNEREDLVQDFINAVKEFVNDKENDGKLIGVHCTHGLNRTGYLICRYMIDVDNYSASDAISMFEYYRGHPMEREHYKKSLYEAERKKKYGKSSGKSSGNSADSTISSEQLHRNNSQ</sequence>
<reference evidence="9" key="1">
    <citation type="journal article" date="1998" name="Science">
        <title>Genome sequence of the nematode C. elegans: a platform for investigating biology.</title>
        <authorList>
            <consortium name="The C. elegans sequencing consortium"/>
        </authorList>
    </citation>
    <scope>NUCLEOTIDE SEQUENCE [LARGE SCALE GENOMIC DNA]</scope>
    <source>
        <strain evidence="9">Bristol N2</strain>
    </source>
</reference>
<reference evidence="7" key="2">
    <citation type="journal article" date="2006" name="Cell">
        <title>Functional proteomics reveals the biochemical niche of C. elegans DCR-1 in multiple small-RNA-mediated pathways.</title>
        <authorList>
            <person name="Duchaine T.F."/>
            <person name="Wohlschlegel J.A."/>
            <person name="Kennedy S."/>
            <person name="Bei Y."/>
            <person name="Conte D. Jr."/>
            <person name="Pang K."/>
            <person name="Brownell D.R."/>
            <person name="Harding S."/>
            <person name="Mitani S."/>
            <person name="Ruvkun G."/>
            <person name="Yates J.R. III"/>
            <person name="Mello C.C."/>
        </authorList>
    </citation>
    <scope>FUNCTION</scope>
    <scope>INTERACTION WITH DCR-1</scope>
    <scope>IDENTIFICATION BY MASS SPECTROMETRY</scope>
    <scope>DISRUPTION PHENOTYPE</scope>
</reference>
<reference key="3">
    <citation type="journal article" date="2020" name="Mol. Cell">
        <title>The RNA phosphatase PIR-1 regulates endogenous small RNA pathways in C. elegans.</title>
        <authorList>
            <person name="Chaves D.A."/>
            <person name="Dai H."/>
            <person name="Li L."/>
            <person name="Moresco J.J."/>
            <person name="Oh M.E."/>
            <person name="Conte D. Jr."/>
            <person name="Yates J.R. III"/>
            <person name="Mello C.C."/>
            <person name="Gu W."/>
        </authorList>
    </citation>
    <scope>FUNCTION</scope>
    <scope>INTERACTION WITH DCR-1; RRF-3; ERI-1; DRH-3 AND RDE-8</scope>
    <scope>CATALYTIC ACTIVITY</scope>
    <scope>SUBCELLULAR LOCATION</scope>
    <scope>DEVELOPMENTAL STAGE</scope>
    <scope>MUTAGENESIS OF CYS-150</scope>
</reference>
<proteinExistence type="evidence at protein level"/>
<name>DUS11_CAEEL</name>
<gene>
    <name evidence="10" type="primary">pir-1</name>
    <name evidence="10" type="ORF">T23G7.5</name>
</gene>
<organism evidence="9">
    <name type="scientific">Caenorhabditis elegans</name>
    <dbReference type="NCBI Taxonomy" id="6239"/>
    <lineage>
        <taxon>Eukaryota</taxon>
        <taxon>Metazoa</taxon>
        <taxon>Ecdysozoa</taxon>
        <taxon>Nematoda</taxon>
        <taxon>Chromadorea</taxon>
        <taxon>Rhabditida</taxon>
        <taxon>Rhabditina</taxon>
        <taxon>Rhabditomorpha</taxon>
        <taxon>Rhabditoidea</taxon>
        <taxon>Rhabditidae</taxon>
        <taxon>Peloderinae</taxon>
        <taxon>Caenorhabditis</taxon>
    </lineage>
</organism>
<dbReference type="EC" id="3.1.3.-" evidence="6"/>
<dbReference type="EMBL" id="BX284602">
    <property type="protein sequence ID" value="CAA92703.2"/>
    <property type="molecule type" value="Genomic_DNA"/>
</dbReference>
<dbReference type="PIR" id="T25206">
    <property type="entry name" value="T25206"/>
</dbReference>
<dbReference type="RefSeq" id="NP_495959.2">
    <property type="nucleotide sequence ID" value="NM_063558.6"/>
</dbReference>
<dbReference type="SMR" id="Q22707"/>
<dbReference type="DIP" id="DIP-35121N"/>
<dbReference type="FunCoup" id="Q22707">
    <property type="interactions" value="2034"/>
</dbReference>
<dbReference type="IntAct" id="Q22707">
    <property type="interactions" value="2"/>
</dbReference>
<dbReference type="STRING" id="6239.T23G7.5a.1"/>
<dbReference type="PaxDb" id="6239-T23G7.5a.1"/>
<dbReference type="PeptideAtlas" id="Q22707"/>
<dbReference type="EnsemblMetazoa" id="T23G7.5a.1">
    <property type="protein sequence ID" value="T23G7.5a.1"/>
    <property type="gene ID" value="WBGene00011967"/>
</dbReference>
<dbReference type="GeneID" id="174460"/>
<dbReference type="KEGG" id="cel:CELE_T23G7.5"/>
<dbReference type="UCSC" id="T23G7.5a">
    <property type="organism name" value="c. elegans"/>
</dbReference>
<dbReference type="AGR" id="WB:WBGene00011967"/>
<dbReference type="CTD" id="174460"/>
<dbReference type="WormBase" id="T23G7.5a">
    <property type="protein sequence ID" value="CE48135"/>
    <property type="gene ID" value="WBGene00011967"/>
    <property type="gene designation" value="pir-1"/>
</dbReference>
<dbReference type="eggNOG" id="KOG2386">
    <property type="taxonomic scope" value="Eukaryota"/>
</dbReference>
<dbReference type="GeneTree" id="ENSGT00940000168004"/>
<dbReference type="HOGENOM" id="CLU_057587_3_0_1"/>
<dbReference type="InParanoid" id="Q22707"/>
<dbReference type="OMA" id="NTFKYYD"/>
<dbReference type="OrthoDB" id="428974at2759"/>
<dbReference type="PRO" id="PR:Q22707"/>
<dbReference type="Proteomes" id="UP000001940">
    <property type="component" value="Chromosome II"/>
</dbReference>
<dbReference type="Bgee" id="WBGene00011967">
    <property type="expression patterns" value="Expressed in germ line (C elegans) and 4 other cell types or tissues"/>
</dbReference>
<dbReference type="GO" id="GO:0005737">
    <property type="term" value="C:cytoplasm"/>
    <property type="evidence" value="ECO:0007669"/>
    <property type="project" value="UniProtKB-SubCell"/>
</dbReference>
<dbReference type="GO" id="GO:0005634">
    <property type="term" value="C:nucleus"/>
    <property type="evidence" value="ECO:0007669"/>
    <property type="project" value="UniProtKB-SubCell"/>
</dbReference>
<dbReference type="GO" id="GO:0050355">
    <property type="term" value="F:inorganic triphosphate phosphatase activity"/>
    <property type="evidence" value="ECO:0000314"/>
    <property type="project" value="UniProtKB"/>
</dbReference>
<dbReference type="GO" id="GO:0004721">
    <property type="term" value="F:phosphoprotein phosphatase activity"/>
    <property type="evidence" value="ECO:0007669"/>
    <property type="project" value="UniProtKB-KW"/>
</dbReference>
<dbReference type="GO" id="GO:0003723">
    <property type="term" value="F:RNA binding"/>
    <property type="evidence" value="ECO:0007669"/>
    <property type="project" value="UniProtKB-KW"/>
</dbReference>
<dbReference type="GO" id="GO:0031047">
    <property type="term" value="P:regulatory ncRNA-mediated gene silencing"/>
    <property type="evidence" value="ECO:0007669"/>
    <property type="project" value="UniProtKB-KW"/>
</dbReference>
<dbReference type="CDD" id="cd17665">
    <property type="entry name" value="DSP_DUSP11"/>
    <property type="match status" value="1"/>
</dbReference>
<dbReference type="FunFam" id="3.90.190.10:FF:000064">
    <property type="entry name" value="RNA/RNP complex-1-interacting phosphatase homolog"/>
    <property type="match status" value="1"/>
</dbReference>
<dbReference type="Gene3D" id="3.90.190.10">
    <property type="entry name" value="Protein tyrosine phosphatase superfamily"/>
    <property type="match status" value="1"/>
</dbReference>
<dbReference type="InterPro" id="IPR000340">
    <property type="entry name" value="Dual-sp_phosphatase_cat-dom"/>
</dbReference>
<dbReference type="InterPro" id="IPR051029">
    <property type="entry name" value="mRNA_Capping_Enz/RNA_Phosphat"/>
</dbReference>
<dbReference type="InterPro" id="IPR029021">
    <property type="entry name" value="Prot-tyrosine_phosphatase-like"/>
</dbReference>
<dbReference type="InterPro" id="IPR016130">
    <property type="entry name" value="Tyr_Pase_AS"/>
</dbReference>
<dbReference type="InterPro" id="IPR003595">
    <property type="entry name" value="Tyr_Pase_cat"/>
</dbReference>
<dbReference type="InterPro" id="IPR000387">
    <property type="entry name" value="Tyr_Pase_dom"/>
</dbReference>
<dbReference type="InterPro" id="IPR020422">
    <property type="entry name" value="TYR_PHOSPHATASE_DUAL_dom"/>
</dbReference>
<dbReference type="PANTHER" id="PTHR10367:SF9">
    <property type="entry name" value="DUAL-SPECIFICITY PHOSPHATASE 11 (RNA_RNP COMPLEX 1-INTERACTING)"/>
    <property type="match status" value="1"/>
</dbReference>
<dbReference type="PANTHER" id="PTHR10367">
    <property type="entry name" value="MRNA-CAPPING ENZYME"/>
    <property type="match status" value="1"/>
</dbReference>
<dbReference type="Pfam" id="PF00782">
    <property type="entry name" value="DSPc"/>
    <property type="match status" value="1"/>
</dbReference>
<dbReference type="SMART" id="SM00195">
    <property type="entry name" value="DSPc"/>
    <property type="match status" value="1"/>
</dbReference>
<dbReference type="SMART" id="SM00404">
    <property type="entry name" value="PTPc_motif"/>
    <property type="match status" value="1"/>
</dbReference>
<dbReference type="SUPFAM" id="SSF52799">
    <property type="entry name" value="(Phosphotyrosine protein) phosphatases II"/>
    <property type="match status" value="1"/>
</dbReference>
<dbReference type="PROSITE" id="PS00383">
    <property type="entry name" value="TYR_PHOSPHATASE_1"/>
    <property type="match status" value="1"/>
</dbReference>
<dbReference type="PROSITE" id="PS50056">
    <property type="entry name" value="TYR_PHOSPHATASE_2"/>
    <property type="match status" value="1"/>
</dbReference>
<dbReference type="PROSITE" id="PS50054">
    <property type="entry name" value="TYR_PHOSPHATASE_DUAL"/>
    <property type="match status" value="1"/>
</dbReference>
<evidence type="ECO:0000250" key="1">
    <source>
        <dbReference type="UniProtKB" id="O75319"/>
    </source>
</evidence>
<evidence type="ECO:0000255" key="2"/>
<evidence type="ECO:0000255" key="3">
    <source>
        <dbReference type="PROSITE-ProRule" id="PRU00160"/>
    </source>
</evidence>
<evidence type="ECO:0000256" key="4">
    <source>
        <dbReference type="SAM" id="MobiDB-lite"/>
    </source>
</evidence>
<evidence type="ECO:0000269" key="5">
    <source>
    </source>
</evidence>
<evidence type="ECO:0000269" key="6">
    <source>
    </source>
</evidence>
<evidence type="ECO:0000305" key="7"/>
<evidence type="ECO:0000305" key="8">
    <source>
    </source>
</evidence>
<evidence type="ECO:0000312" key="9">
    <source>
        <dbReference type="Proteomes" id="UP000001940"/>
    </source>
</evidence>
<evidence type="ECO:0000312" key="10">
    <source>
        <dbReference type="WormBase" id="T23G7.5a"/>
    </source>
</evidence>
<comment type="function">
    <text evidence="1 5 6">RNA polyphosphatase which has RNA 5'-triphosphatase and diphosphatase activities (PubMed:33378643). Displays poor protein-tyrosine phosphatase activity (By similarity). Binds to 5'-triphosphorylated RNAs (also called ppp-RNAs) (PubMed:33378643). Dephosphorylates ppp-RNAs converting them to 5'-monophosphorylated RNAs (also called p-RNAs) (PubMed:33378643). During small-RNA-mediated gene-silencing or RNA interference (RNAi), involved in the dcr-1-mediated processing of an amplified dsRNA intermediate (PubMed:16439208). This is most likely in association with several components of the ERI/DICER complex including dcr-1, eri-1 and rrf-3 (PubMed:33378643). Plays a role in the biogenesis of 26G small interfering RNAs (26G-siRNAs), which are a class of 26 nucleotide siRNAs that possess a guanine residue at the 5'-end, by dephosphorylating 5'-triphosphorylated 26G-siRNAs prior to their maturation by the ERI/DICER complex (PubMed:33378643). Plays a role in the biogenesis of csr-1-bound 22G small interfering RNAs (22G-siRNAs), which are a class of 22 nucleotide siRNAs that possess a guanine residue at the 5'-end (PubMed:33378643). Not required for the biogenesis of microRNAs (miRNA) or for the biogenesis of a class of 21 nucleotide PIWI-interacting RNAs (piRNAs) that possess a uracil residue at the 5'-end (also called 21U-RNAs) (PubMed:33378643).</text>
</comment>
<comment type="subunit">
    <text evidence="5 6">Interacts with the ERI/DICER complex component dcr-1 (PubMed:16439208, PubMed:33378643). Interacts with ERI/DICER complex components rrf-3 and isoform b of eri-1 (PubMed:33378643). Interacts with drh-3 and rde-8 (PubMed:33378643).</text>
</comment>
<comment type="subcellular location">
    <subcellularLocation>
        <location evidence="6">Cytoplasm</location>
    </subcellularLocation>
    <subcellularLocation>
        <location evidence="6">Nucleus</location>
    </subcellularLocation>
</comment>
<comment type="developmental stage">
    <text evidence="6">Expressed from embryogenesis to adulthood (PubMed:33378643). Expressed in the germline and somatic cells of L4 stage larvae (PubMed:33378643). In the germline of L4 stage hermaphrodites, uniformally expressed in germ cells from the proliferative mitotic zone to the meiotic mid-pachytene region (PubMed:33378643). Expression reduces in germ cells transitioning through diplotene and meiosis I and II and increases again before cells begin spermatogenesis (PubMed:33378643). During oogenesis, expressed in the distal germline and through the bend in the ovotestis (PubMed:33378643). Not expressed in maturing oocytes or the embryonic germline (PubMed:33378643). Expressed in most somatic cells throughout development, with high expression in intestinal cells (PubMed:33378643).</text>
</comment>
<comment type="disruption phenotype">
    <text evidence="5">Arrests at the L4 larval stage due to a failure to undergo the L4 to adult molt. Sterile due to the lack of functional gametes. In RNAi-mediated knockdown assays, fails to process dsRNA which results in the accumulation of high molecular weight dsRNA-derived RNA species.</text>
</comment>
<comment type="similarity">
    <text evidence="7">Belongs to the protein-tyrosine phosphatase family. Non-receptor class dual specificity subfamily.</text>
</comment>
<comment type="caution">
    <text evidence="6 8">Two isoforms have been reported, however the molecular basis and sequence differences have not been determined. Both isoforms interact with components of the ERI/DICER complex and both are detected at all larval and adult stages, but only pir-1b is expressed in embryos (PubMed:33378643). Furthermore, pir-1a expression depends on drh-3 activity and pir-1b expression depends on dcr-1 activity (PubMed:33378643).</text>
</comment>
<protein>
    <recommendedName>
        <fullName evidence="7">RNA/RNP complex-1-interacting phosphatase homolog</fullName>
        <ecNumber evidence="6">3.1.3.-</ecNumber>
    </recommendedName>
    <alternativeName>
        <fullName evidence="1">Dual specificity protein phosphatase 11 homolog</fullName>
    </alternativeName>
    <alternativeName>
        <fullName evidence="10">Phosphatase interacting with RNA/RNP complex-1</fullName>
    </alternativeName>
</protein>
<keyword id="KW-0963">Cytoplasm</keyword>
<keyword id="KW-0378">Hydrolase</keyword>
<keyword id="KW-0539">Nucleus</keyword>
<keyword id="KW-0904">Protein phosphatase</keyword>
<keyword id="KW-1185">Reference proteome</keyword>
<keyword id="KW-0694">RNA-binding</keyword>
<keyword id="KW-0943">RNA-mediated gene silencing</keyword>
<accession>Q22707</accession>
<feature type="chain" id="PRO_0000444001" description="RNA/RNP complex-1-interacting phosphatase homolog">
    <location>
        <begin position="1"/>
        <end position="233"/>
    </location>
</feature>
<feature type="domain" description="Tyrosine-protein phosphatase" evidence="3">
    <location>
        <begin position="34"/>
        <end position="206"/>
    </location>
</feature>
<feature type="region of interest" description="Disordered" evidence="4">
    <location>
        <begin position="1"/>
        <end position="21"/>
    </location>
</feature>
<feature type="region of interest" description="Disordered" evidence="4">
    <location>
        <begin position="204"/>
        <end position="233"/>
    </location>
</feature>
<feature type="compositionally biased region" description="Basic residues" evidence="4">
    <location>
        <begin position="1"/>
        <end position="14"/>
    </location>
</feature>
<feature type="compositionally biased region" description="Low complexity" evidence="4">
    <location>
        <begin position="208"/>
        <end position="217"/>
    </location>
</feature>
<feature type="compositionally biased region" description="Polar residues" evidence="4">
    <location>
        <begin position="218"/>
        <end position="233"/>
    </location>
</feature>
<feature type="active site" description="Phosphocysteine intermediate" evidence="3">
    <location>
        <position position="150"/>
    </location>
</feature>
<feature type="active site" description="Proton donor/acceptor" evidence="2">
    <location>
        <position position="156"/>
    </location>
</feature>
<feature type="binding site" evidence="1">
    <location>
        <begin position="151"/>
        <end position="156"/>
    </location>
    <ligand>
        <name>substrate</name>
    </ligand>
</feature>
<feature type="mutagenesis site" description="In wg1000; catalytically inactive. Binds to 5'-triphosphorylated RNAs, but does not convert them to 5'-monophosphorylated RNAs. Reduces levels of 26G small interfering RNAs (siRNAs), which are a classes of 26 nucleotide siRNAs that possess a guanine residue at the 5'-end. Furthermore, 40% of the 26G-siRNAs present are 5'-triphosphorylated." evidence="6">
    <original>C</original>
    <variation>S</variation>
    <location>
        <position position="150"/>
    </location>
</feature>